<comment type="function">
    <text evidence="1">Forms oxaloacetate, a four-carbon dicarboxylic acid source for the tricarboxylic acid cycle.</text>
</comment>
<comment type="catalytic activity">
    <reaction evidence="1">
        <text>oxaloacetate + phosphate = phosphoenolpyruvate + hydrogencarbonate</text>
        <dbReference type="Rhea" id="RHEA:28370"/>
        <dbReference type="ChEBI" id="CHEBI:16452"/>
        <dbReference type="ChEBI" id="CHEBI:17544"/>
        <dbReference type="ChEBI" id="CHEBI:43474"/>
        <dbReference type="ChEBI" id="CHEBI:58702"/>
        <dbReference type="EC" id="4.1.1.31"/>
    </reaction>
</comment>
<comment type="cofactor">
    <cofactor evidence="1">
        <name>Mg(2+)</name>
        <dbReference type="ChEBI" id="CHEBI:18420"/>
    </cofactor>
</comment>
<comment type="similarity">
    <text evidence="1">Belongs to the PEPCase type 1 family.</text>
</comment>
<name>CAPP_SYNPW</name>
<evidence type="ECO:0000255" key="1">
    <source>
        <dbReference type="HAMAP-Rule" id="MF_00595"/>
    </source>
</evidence>
<evidence type="ECO:0000256" key="2">
    <source>
        <dbReference type="SAM" id="MobiDB-lite"/>
    </source>
</evidence>
<gene>
    <name evidence="1" type="primary">ppc</name>
    <name type="ordered locus">SynWH7803_0454</name>
</gene>
<proteinExistence type="inferred from homology"/>
<accession>A5GIW5</accession>
<protein>
    <recommendedName>
        <fullName evidence="1">Phosphoenolpyruvate carboxylase</fullName>
        <shortName evidence="1">PEPC</shortName>
        <shortName evidence="1">PEPCase</shortName>
        <ecNumber evidence="1">4.1.1.31</ecNumber>
    </recommendedName>
</protein>
<dbReference type="EC" id="4.1.1.31" evidence="1"/>
<dbReference type="EMBL" id="CT971583">
    <property type="protein sequence ID" value="CAK22880.1"/>
    <property type="molecule type" value="Genomic_DNA"/>
</dbReference>
<dbReference type="SMR" id="A5GIW5"/>
<dbReference type="STRING" id="32051.SynWH7803_0454"/>
<dbReference type="KEGG" id="syx:SynWH7803_0454"/>
<dbReference type="eggNOG" id="COG2352">
    <property type="taxonomic scope" value="Bacteria"/>
</dbReference>
<dbReference type="HOGENOM" id="CLU_006557_2_0_3"/>
<dbReference type="Proteomes" id="UP000001566">
    <property type="component" value="Chromosome"/>
</dbReference>
<dbReference type="GO" id="GO:0005829">
    <property type="term" value="C:cytosol"/>
    <property type="evidence" value="ECO:0007669"/>
    <property type="project" value="TreeGrafter"/>
</dbReference>
<dbReference type="GO" id="GO:0000287">
    <property type="term" value="F:magnesium ion binding"/>
    <property type="evidence" value="ECO:0007669"/>
    <property type="project" value="UniProtKB-UniRule"/>
</dbReference>
<dbReference type="GO" id="GO:0008964">
    <property type="term" value="F:phosphoenolpyruvate carboxylase activity"/>
    <property type="evidence" value="ECO:0007669"/>
    <property type="project" value="UniProtKB-UniRule"/>
</dbReference>
<dbReference type="GO" id="GO:0015977">
    <property type="term" value="P:carbon fixation"/>
    <property type="evidence" value="ECO:0007669"/>
    <property type="project" value="UniProtKB-UniRule"/>
</dbReference>
<dbReference type="GO" id="GO:0006107">
    <property type="term" value="P:oxaloacetate metabolic process"/>
    <property type="evidence" value="ECO:0007669"/>
    <property type="project" value="UniProtKB-UniRule"/>
</dbReference>
<dbReference type="GO" id="GO:0006099">
    <property type="term" value="P:tricarboxylic acid cycle"/>
    <property type="evidence" value="ECO:0007669"/>
    <property type="project" value="InterPro"/>
</dbReference>
<dbReference type="Gene3D" id="1.20.1440.90">
    <property type="entry name" value="Phosphoenolpyruvate/pyruvate domain"/>
    <property type="match status" value="1"/>
</dbReference>
<dbReference type="HAMAP" id="MF_00595">
    <property type="entry name" value="PEPcase_type1"/>
    <property type="match status" value="1"/>
</dbReference>
<dbReference type="InterPro" id="IPR021135">
    <property type="entry name" value="PEP_COase"/>
</dbReference>
<dbReference type="InterPro" id="IPR022805">
    <property type="entry name" value="PEP_COase_bac/pln-type"/>
</dbReference>
<dbReference type="InterPro" id="IPR018129">
    <property type="entry name" value="PEP_COase_Lys_AS"/>
</dbReference>
<dbReference type="InterPro" id="IPR033129">
    <property type="entry name" value="PEPCASE_His_AS"/>
</dbReference>
<dbReference type="InterPro" id="IPR015813">
    <property type="entry name" value="Pyrv/PenolPyrv_kinase-like_dom"/>
</dbReference>
<dbReference type="NCBIfam" id="NF000584">
    <property type="entry name" value="PRK00009.1"/>
    <property type="match status" value="1"/>
</dbReference>
<dbReference type="PANTHER" id="PTHR30523">
    <property type="entry name" value="PHOSPHOENOLPYRUVATE CARBOXYLASE"/>
    <property type="match status" value="1"/>
</dbReference>
<dbReference type="PANTHER" id="PTHR30523:SF6">
    <property type="entry name" value="PHOSPHOENOLPYRUVATE CARBOXYLASE"/>
    <property type="match status" value="1"/>
</dbReference>
<dbReference type="Pfam" id="PF00311">
    <property type="entry name" value="PEPcase"/>
    <property type="match status" value="1"/>
</dbReference>
<dbReference type="PRINTS" id="PR00150">
    <property type="entry name" value="PEPCARBXLASE"/>
</dbReference>
<dbReference type="SUPFAM" id="SSF51621">
    <property type="entry name" value="Phosphoenolpyruvate/pyruvate domain"/>
    <property type="match status" value="1"/>
</dbReference>
<dbReference type="PROSITE" id="PS00781">
    <property type="entry name" value="PEPCASE_1"/>
    <property type="match status" value="1"/>
</dbReference>
<dbReference type="PROSITE" id="PS00393">
    <property type="entry name" value="PEPCASE_2"/>
    <property type="match status" value="1"/>
</dbReference>
<sequence length="1003" mass="113205">MIMTVSDPGGSSMSSSSAITPESEQAMAAVNDAPVGGQLLQQRLALVEDLWQTVLRSECPAEQAERLLRMKQLSDPVLPEGNAVSSDALVSLIRDMDLSEAIAAARAFSLYFQLVNILEQRIEEDGYLESIVRSQDTAEQINPFTPPLATQTEPATFRELFERLRRLNVPPAQLETLLQELDIRLVFTAHPTEIVRHTVRHKQRRVASLLQQLEAQTESSTFEAGTIRLQLEEEIRLWWRTDELHQFKPSVLDEVDYALHYFQQVLFDAMPQLRRRLSSALASSYPDVQLPPSSFCTFGSWVGSDRDGNPSVTTDITWRTACYQRQLMLERYVSAVQGLRDQLSISMQWSQVSAPLLESLEMDRLRFPEVYEERATRYRLEPYRLKLSFVLERLRLTQIRNQQLAEAGWRAPADGLLSSNPEAPQSESLHYGSVAEFRSDLELIRTSLVSTDLTCEPLDTLLTQVHIFGFSLAGLDIRQESTRHSDALDEVSRYLNPDQAYGDLNEQERVQWLLQELQTRRPLIPPSVSWSPTTEETVDVFRTLHRLQDEFGSRICRTYVISMSHSVSDLLEVLLLSKEAGLVEPSAGHADLLVVPLFETVEDLQRAPEVMEELFQTPLYRNLLPRVGSQGQPLQELMLGYSDSNKDSGFLSSNWEIHKAQIALQDLAARNGVALRLFHGRGGSVGRGGGPAYQAILAQPSGTLQGRIKITEQGEVLASKYSLPELALYNLETVSTAVVQNSLVTNQLDATPSWNDLMARLARCSRRHYRALVHDNPDLVAFFEQVTPIEEISKLQISSRPARRKTGTRDLSSLRAIPWVFGWTQSRFLLPSWFGVGTALHEELVNDPDQMSLLRTLHQRWPFFRMLISKVEMTLSKVDLDLARHYVTSLGSADHRQAFDGIYTTIAEEYSLTHRLVLEITGQERLLDADPALQLSVDLRNRTIVPLGFLQVALLRRLRDQNRQPPMSESPSDGDGRTYSRSELLRGALLTINGIAAGMRNTG</sequence>
<feature type="chain" id="PRO_1000025599" description="Phosphoenolpyruvate carboxylase">
    <location>
        <begin position="1"/>
        <end position="1003"/>
    </location>
</feature>
<feature type="region of interest" description="Disordered" evidence="2">
    <location>
        <begin position="1"/>
        <end position="24"/>
    </location>
</feature>
<feature type="active site" evidence="1">
    <location>
        <position position="190"/>
    </location>
</feature>
<feature type="active site" evidence="1">
    <location>
        <position position="646"/>
    </location>
</feature>
<keyword id="KW-0120">Carbon dioxide fixation</keyword>
<keyword id="KW-0456">Lyase</keyword>
<keyword id="KW-0460">Magnesium</keyword>
<keyword id="KW-1185">Reference proteome</keyword>
<organism>
    <name type="scientific">Synechococcus sp. (strain WH7803)</name>
    <dbReference type="NCBI Taxonomy" id="32051"/>
    <lineage>
        <taxon>Bacteria</taxon>
        <taxon>Bacillati</taxon>
        <taxon>Cyanobacteriota</taxon>
        <taxon>Cyanophyceae</taxon>
        <taxon>Synechococcales</taxon>
        <taxon>Synechococcaceae</taxon>
        <taxon>Synechococcus</taxon>
    </lineage>
</organism>
<reference key="1">
    <citation type="submission" date="2006-05" db="EMBL/GenBank/DDBJ databases">
        <authorList>
            <consortium name="Genoscope"/>
        </authorList>
    </citation>
    <scope>NUCLEOTIDE SEQUENCE [LARGE SCALE GENOMIC DNA]</scope>
    <source>
        <strain>WH7803</strain>
    </source>
</reference>